<sequence length="298" mass="33243">MSNAREIRSKVQSVKNTQKITGAMELVAASKMRGTIVKMNNVRPYVESANTIIKNVTAASIDYPNPYLFDRDVKRVGYIVISTDRGLCGGLNINLFKHVLKEIKNNIEDRVGVDVCVIGSKAENFFAKLKDVNIVATAHYNDKDKEGSIRAIGGAVKVMLDKFTAGEIDRLYMSSNQFVSTIKQRPRLQTLLPIQDIFSAEEIKANKEKATKGHWDYIYERDIEEVLNALCIRYIEAQVRGAILENAACEQAARMMAMKNATDNASDIIDQLKLDYNKIRQAMITQELAEICSGAAAV</sequence>
<reference key="1">
    <citation type="journal article" date="2007" name="PLoS ONE">
        <title>Complete genomic characterization of a pathogenic A.II strain of Francisella tularensis subspecies tularensis.</title>
        <authorList>
            <person name="Beckstrom-Sternberg S.M."/>
            <person name="Auerbach R.K."/>
            <person name="Godbole S."/>
            <person name="Pearson J.V."/>
            <person name="Beckstrom-Sternberg J.S."/>
            <person name="Deng Z."/>
            <person name="Munk C."/>
            <person name="Kubota K."/>
            <person name="Zhou Y."/>
            <person name="Bruce D."/>
            <person name="Noronha J."/>
            <person name="Scheuermann R.H."/>
            <person name="Wang A."/>
            <person name="Wei X."/>
            <person name="Wang J."/>
            <person name="Hao J."/>
            <person name="Wagner D.M."/>
            <person name="Brettin T.S."/>
            <person name="Brown N."/>
            <person name="Gilna P."/>
            <person name="Keim P.S."/>
        </authorList>
    </citation>
    <scope>NUCLEOTIDE SEQUENCE [LARGE SCALE GENOMIC DNA]</scope>
    <source>
        <strain>WY96-3418</strain>
    </source>
</reference>
<organism>
    <name type="scientific">Francisella tularensis subsp. tularensis (strain WY96-3418)</name>
    <dbReference type="NCBI Taxonomy" id="418136"/>
    <lineage>
        <taxon>Bacteria</taxon>
        <taxon>Pseudomonadati</taxon>
        <taxon>Pseudomonadota</taxon>
        <taxon>Gammaproteobacteria</taxon>
        <taxon>Thiotrichales</taxon>
        <taxon>Francisellaceae</taxon>
        <taxon>Francisella</taxon>
    </lineage>
</organism>
<feature type="chain" id="PRO_1000053217" description="ATP synthase gamma chain">
    <location>
        <begin position="1"/>
        <end position="298"/>
    </location>
</feature>
<keyword id="KW-0066">ATP synthesis</keyword>
<keyword id="KW-0997">Cell inner membrane</keyword>
<keyword id="KW-1003">Cell membrane</keyword>
<keyword id="KW-0139">CF(1)</keyword>
<keyword id="KW-0375">Hydrogen ion transport</keyword>
<keyword id="KW-0406">Ion transport</keyword>
<keyword id="KW-0472">Membrane</keyword>
<keyword id="KW-0813">Transport</keyword>
<proteinExistence type="inferred from homology"/>
<protein>
    <recommendedName>
        <fullName evidence="1">ATP synthase gamma chain</fullName>
    </recommendedName>
    <alternativeName>
        <fullName evidence="1">ATP synthase F1 sector gamma subunit</fullName>
    </alternativeName>
    <alternativeName>
        <fullName evidence="1">F-ATPase gamma subunit</fullName>
    </alternativeName>
</protein>
<dbReference type="EMBL" id="CP000608">
    <property type="protein sequence ID" value="ABO46125.1"/>
    <property type="molecule type" value="Genomic_DNA"/>
</dbReference>
<dbReference type="RefSeq" id="WP_003024610.1">
    <property type="nucleotide sequence ID" value="NC_009257.1"/>
</dbReference>
<dbReference type="SMR" id="A4IW23"/>
<dbReference type="KEGG" id="ftw:FTW_0139"/>
<dbReference type="HOGENOM" id="CLU_050669_0_1_6"/>
<dbReference type="GO" id="GO:0005886">
    <property type="term" value="C:plasma membrane"/>
    <property type="evidence" value="ECO:0007669"/>
    <property type="project" value="UniProtKB-SubCell"/>
</dbReference>
<dbReference type="GO" id="GO:0045259">
    <property type="term" value="C:proton-transporting ATP synthase complex"/>
    <property type="evidence" value="ECO:0007669"/>
    <property type="project" value="UniProtKB-KW"/>
</dbReference>
<dbReference type="GO" id="GO:0005524">
    <property type="term" value="F:ATP binding"/>
    <property type="evidence" value="ECO:0007669"/>
    <property type="project" value="UniProtKB-UniRule"/>
</dbReference>
<dbReference type="GO" id="GO:0046933">
    <property type="term" value="F:proton-transporting ATP synthase activity, rotational mechanism"/>
    <property type="evidence" value="ECO:0007669"/>
    <property type="project" value="UniProtKB-UniRule"/>
</dbReference>
<dbReference type="GO" id="GO:0042777">
    <property type="term" value="P:proton motive force-driven plasma membrane ATP synthesis"/>
    <property type="evidence" value="ECO:0007669"/>
    <property type="project" value="UniProtKB-UniRule"/>
</dbReference>
<dbReference type="CDD" id="cd12151">
    <property type="entry name" value="F1-ATPase_gamma"/>
    <property type="match status" value="1"/>
</dbReference>
<dbReference type="Gene3D" id="3.40.1380.10">
    <property type="match status" value="1"/>
</dbReference>
<dbReference type="Gene3D" id="1.10.287.80">
    <property type="entry name" value="ATP synthase, gamma subunit, helix hairpin domain"/>
    <property type="match status" value="1"/>
</dbReference>
<dbReference type="HAMAP" id="MF_00815">
    <property type="entry name" value="ATP_synth_gamma_bact"/>
    <property type="match status" value="1"/>
</dbReference>
<dbReference type="InterPro" id="IPR035968">
    <property type="entry name" value="ATP_synth_F1_ATPase_gsu"/>
</dbReference>
<dbReference type="InterPro" id="IPR000131">
    <property type="entry name" value="ATP_synth_F1_gsu"/>
</dbReference>
<dbReference type="InterPro" id="IPR023632">
    <property type="entry name" value="ATP_synth_F1_gsu_CS"/>
</dbReference>
<dbReference type="NCBIfam" id="TIGR01146">
    <property type="entry name" value="ATPsyn_F1gamma"/>
    <property type="match status" value="1"/>
</dbReference>
<dbReference type="NCBIfam" id="NF009956">
    <property type="entry name" value="PRK13422.1"/>
    <property type="match status" value="1"/>
</dbReference>
<dbReference type="PANTHER" id="PTHR11693">
    <property type="entry name" value="ATP SYNTHASE GAMMA CHAIN"/>
    <property type="match status" value="1"/>
</dbReference>
<dbReference type="PANTHER" id="PTHR11693:SF22">
    <property type="entry name" value="ATP SYNTHASE SUBUNIT GAMMA, MITOCHONDRIAL"/>
    <property type="match status" value="1"/>
</dbReference>
<dbReference type="Pfam" id="PF00231">
    <property type="entry name" value="ATP-synt"/>
    <property type="match status" value="1"/>
</dbReference>
<dbReference type="PRINTS" id="PR00126">
    <property type="entry name" value="ATPASEGAMMA"/>
</dbReference>
<dbReference type="SUPFAM" id="SSF52943">
    <property type="entry name" value="ATP synthase (F1-ATPase), gamma subunit"/>
    <property type="match status" value="1"/>
</dbReference>
<dbReference type="PROSITE" id="PS00153">
    <property type="entry name" value="ATPASE_GAMMA"/>
    <property type="match status" value="1"/>
</dbReference>
<comment type="function">
    <text evidence="1">Produces ATP from ADP in the presence of a proton gradient across the membrane. The gamma chain is believed to be important in regulating ATPase activity and the flow of protons through the CF(0) complex.</text>
</comment>
<comment type="subunit">
    <text evidence="1">F-type ATPases have 2 components, CF(1) - the catalytic core - and CF(0) - the membrane proton channel. CF(1) has five subunits: alpha(3), beta(3), gamma(1), delta(1), epsilon(1). CF(0) has three main subunits: a, b and c.</text>
</comment>
<comment type="subcellular location">
    <subcellularLocation>
        <location evidence="1">Cell inner membrane</location>
        <topology evidence="1">Peripheral membrane protein</topology>
    </subcellularLocation>
</comment>
<comment type="similarity">
    <text evidence="1">Belongs to the ATPase gamma chain family.</text>
</comment>
<accession>A4IW23</accession>
<name>ATPG_FRATW</name>
<gene>
    <name evidence="1" type="primary">atpG</name>
    <name type="ordered locus">FTW_0139</name>
</gene>
<evidence type="ECO:0000255" key="1">
    <source>
        <dbReference type="HAMAP-Rule" id="MF_00815"/>
    </source>
</evidence>